<protein>
    <recommendedName>
        <fullName>Polyadenylate-binding protein, cytoplasmic and nuclear</fullName>
        <shortName>PABP</shortName>
        <shortName>Poly(A)-binding protein</shortName>
    </recommendedName>
    <alternativeName>
        <fullName>Polyadenylate tail-binding protein</fullName>
    </alternativeName>
</protein>
<sequence length="502" mass="56508">MEIDESKRASSDSLTIYVGELSPKTLDSDLFRVFSNVGKVLSVKLIKRAEPVSSFAFVTFENEEDAERAIREYKHYELHNRQIRVMKKDERPPETGNIFVKNLPEDFTGKDLDDAFSMFGEIVSCKVATTSHGKSKGYGFVQFKEKKAAKKVIKNFSSLDGLLLGGNRIVVELYNPEIKKGESKKTSATFTNCFIKNFPFDASEAELLELLERYGKVTSLFFPVKDNGKPKGFAFANFENHESALNAIKNLHGTFPFGAGRDGTGEAFYIQKGQRKEERAEELRKMFEQMSMQGQSYKKNLYITNIPEGFGCEELGSIFKEFGNITSISVGVDGANSQKQYAYICYSTPEEASIAVERGNEIYLDGNRLQVAYFKNKLERMKEKEFGGGLGYKPGVPYMYNQGVSFASRGFKRERNRGGAAKPYGNELEKLHSLVLAAAPSFKSQWKDFGVGNEVEFANKVIRAFRSRSEEEIKDMIDLNFVLTKNIASAIEDDNSNDQVLL</sequence>
<reference key="1">
    <citation type="journal article" date="2001" name="Nature">
        <title>Genome sequence and gene compaction of the eukaryote parasite Encephalitozoon cuniculi.</title>
        <authorList>
            <person name="Katinka M.D."/>
            <person name="Duprat S."/>
            <person name="Cornillot E."/>
            <person name="Metenier G."/>
            <person name="Thomarat F."/>
            <person name="Prensier G."/>
            <person name="Barbe V."/>
            <person name="Peyretaillade E."/>
            <person name="Brottier P."/>
            <person name="Wincker P."/>
            <person name="Delbac F."/>
            <person name="El Alaoui H."/>
            <person name="Peyret P."/>
            <person name="Saurin W."/>
            <person name="Gouy M."/>
            <person name="Weissenbach J."/>
            <person name="Vivares C.P."/>
        </authorList>
    </citation>
    <scope>NUCLEOTIDE SEQUENCE [LARGE SCALE GENOMIC DNA]</scope>
    <source>
        <strain>GB-M1</strain>
    </source>
</reference>
<reference key="2">
    <citation type="journal article" date="2006" name="Proteomics">
        <title>Proteomic analysis of the eukaryotic parasite Encephalitozoon cuniculi (microsporidia): a reference map for proteins expressed in late sporogonial stages.</title>
        <authorList>
            <person name="Brosson D."/>
            <person name="Kuhn L."/>
            <person name="Delbac F."/>
            <person name="Garin J."/>
            <person name="Vivares C.P."/>
            <person name="Texier C."/>
        </authorList>
    </citation>
    <scope>IDENTIFICATION BY MASS SPECTROMETRY [LARGE SCALE ANALYSIS]</scope>
    <scope>DEVELOPMENTAL STAGE</scope>
</reference>
<evidence type="ECO:0000250" key="1"/>
<evidence type="ECO:0000255" key="2">
    <source>
        <dbReference type="PROSITE-ProRule" id="PRU00176"/>
    </source>
</evidence>
<evidence type="ECO:0000269" key="3">
    <source>
    </source>
</evidence>
<evidence type="ECO:0000305" key="4"/>
<comment type="function">
    <text>Binds the poly(A) tail of mRNA. Appears to be an important mediator of the multiple roles of the poly(A) tail in mRNA biogenesis, stability and translation.</text>
</comment>
<comment type="subcellular location">
    <subcellularLocation>
        <location evidence="1">Cytoplasm</location>
    </subcellularLocation>
    <subcellularLocation>
        <location evidence="1">Nucleus</location>
    </subcellularLocation>
</comment>
<comment type="developmental stage">
    <text evidence="3">Expressed in late sporogonial stages.</text>
</comment>
<comment type="similarity">
    <text evidence="4">Belongs to the polyadenylate-binding protein type-1 family.</text>
</comment>
<organism>
    <name type="scientific">Encephalitozoon cuniculi (strain GB-M1)</name>
    <name type="common">Microsporidian parasite</name>
    <dbReference type="NCBI Taxonomy" id="284813"/>
    <lineage>
        <taxon>Eukaryota</taxon>
        <taxon>Fungi</taxon>
        <taxon>Fungi incertae sedis</taxon>
        <taxon>Microsporidia</taxon>
        <taxon>Unikaryonidae</taxon>
        <taxon>Encephalitozoon</taxon>
    </lineage>
</organism>
<gene>
    <name type="primary">PAB1</name>
    <name type="ordered locus">ECU10_1110</name>
</gene>
<keyword id="KW-0963">Cytoplasm</keyword>
<keyword id="KW-0539">Nucleus</keyword>
<keyword id="KW-1185">Reference proteome</keyword>
<keyword id="KW-0677">Repeat</keyword>
<keyword id="KW-0694">RNA-binding</keyword>
<keyword id="KW-0810">Translation regulation</keyword>
<name>PABP_ENCCU</name>
<feature type="chain" id="PRO_0000295391" description="Polyadenylate-binding protein, cytoplasmic and nuclear">
    <location>
        <begin position="1"/>
        <end position="502"/>
    </location>
</feature>
<feature type="domain" description="RRM 1" evidence="2">
    <location>
        <begin position="14"/>
        <end position="90"/>
    </location>
</feature>
<feature type="domain" description="RRM 2" evidence="2">
    <location>
        <begin position="96"/>
        <end position="176"/>
    </location>
</feature>
<feature type="domain" description="RRM 3" evidence="2">
    <location>
        <begin position="191"/>
        <end position="275"/>
    </location>
</feature>
<feature type="domain" description="RRM 4" evidence="2">
    <location>
        <begin position="299"/>
        <end position="376"/>
    </location>
</feature>
<accession>Q8SR30</accession>
<dbReference type="EMBL" id="AL590449">
    <property type="protein sequence ID" value="CAD25830.1"/>
    <property type="molecule type" value="Genomic_DNA"/>
</dbReference>
<dbReference type="RefSeq" id="NP_586226.1">
    <property type="nucleotide sequence ID" value="NM_001042059.1"/>
</dbReference>
<dbReference type="SMR" id="Q8SR30"/>
<dbReference type="FunCoup" id="Q8SR30">
    <property type="interactions" value="204"/>
</dbReference>
<dbReference type="STRING" id="284813.Q8SR30"/>
<dbReference type="GeneID" id="859875"/>
<dbReference type="KEGG" id="ecu:ECU10_1110"/>
<dbReference type="VEuPathDB" id="MicrosporidiaDB:ECU10_1110"/>
<dbReference type="HOGENOM" id="CLU_012062_22_6_1"/>
<dbReference type="InParanoid" id="Q8SR30"/>
<dbReference type="OMA" id="CQGVKLY"/>
<dbReference type="OrthoDB" id="19742at2759"/>
<dbReference type="Proteomes" id="UP000000819">
    <property type="component" value="Chromosome X"/>
</dbReference>
<dbReference type="GO" id="GO:0005737">
    <property type="term" value="C:cytoplasm"/>
    <property type="evidence" value="ECO:0007669"/>
    <property type="project" value="UniProtKB-SubCell"/>
</dbReference>
<dbReference type="GO" id="GO:0005634">
    <property type="term" value="C:nucleus"/>
    <property type="evidence" value="ECO:0007669"/>
    <property type="project" value="UniProtKB-SubCell"/>
</dbReference>
<dbReference type="GO" id="GO:0003723">
    <property type="term" value="F:RNA binding"/>
    <property type="evidence" value="ECO:0007669"/>
    <property type="project" value="UniProtKB-KW"/>
</dbReference>
<dbReference type="GO" id="GO:0006417">
    <property type="term" value="P:regulation of translation"/>
    <property type="evidence" value="ECO:0007669"/>
    <property type="project" value="UniProtKB-KW"/>
</dbReference>
<dbReference type="CDD" id="cd12454">
    <property type="entry name" value="RRM2_RIM4_like"/>
    <property type="match status" value="1"/>
</dbReference>
<dbReference type="CDD" id="cd00590">
    <property type="entry name" value="RRM_SF"/>
    <property type="match status" value="1"/>
</dbReference>
<dbReference type="Gene3D" id="3.30.70.330">
    <property type="match status" value="4"/>
</dbReference>
<dbReference type="InterPro" id="IPR012677">
    <property type="entry name" value="Nucleotide-bd_a/b_plait_sf"/>
</dbReference>
<dbReference type="InterPro" id="IPR035979">
    <property type="entry name" value="RBD_domain_sf"/>
</dbReference>
<dbReference type="InterPro" id="IPR000504">
    <property type="entry name" value="RRM_dom"/>
</dbReference>
<dbReference type="PANTHER" id="PTHR24012">
    <property type="entry name" value="RNA BINDING PROTEIN"/>
    <property type="match status" value="1"/>
</dbReference>
<dbReference type="Pfam" id="PF00076">
    <property type="entry name" value="RRM_1"/>
    <property type="match status" value="4"/>
</dbReference>
<dbReference type="SMART" id="SM00360">
    <property type="entry name" value="RRM"/>
    <property type="match status" value="4"/>
</dbReference>
<dbReference type="SUPFAM" id="SSF54928">
    <property type="entry name" value="RNA-binding domain, RBD"/>
    <property type="match status" value="3"/>
</dbReference>
<dbReference type="PROSITE" id="PS50102">
    <property type="entry name" value="RRM"/>
    <property type="match status" value="4"/>
</dbReference>
<proteinExistence type="evidence at protein level"/>